<organism>
    <name type="scientific">Staphylococcus aureus (strain USA300)</name>
    <dbReference type="NCBI Taxonomy" id="367830"/>
    <lineage>
        <taxon>Bacteria</taxon>
        <taxon>Bacillati</taxon>
        <taxon>Bacillota</taxon>
        <taxon>Bacilli</taxon>
        <taxon>Bacillales</taxon>
        <taxon>Staphylococcaceae</taxon>
        <taxon>Staphylococcus</taxon>
    </lineage>
</organism>
<comment type="catalytic activity">
    <reaction>
        <text>an acyl phosphate + H2O = a carboxylate + phosphate + H(+)</text>
        <dbReference type="Rhea" id="RHEA:14965"/>
        <dbReference type="ChEBI" id="CHEBI:15377"/>
        <dbReference type="ChEBI" id="CHEBI:15378"/>
        <dbReference type="ChEBI" id="CHEBI:29067"/>
        <dbReference type="ChEBI" id="CHEBI:43474"/>
        <dbReference type="ChEBI" id="CHEBI:59918"/>
        <dbReference type="EC" id="3.6.1.7"/>
    </reaction>
</comment>
<comment type="similarity">
    <text evidence="2">Belongs to the acylphosphatase family.</text>
</comment>
<feature type="chain" id="PRO_0000326818" description="Acylphosphatase">
    <location>
        <begin position="1"/>
        <end position="89"/>
    </location>
</feature>
<feature type="domain" description="Acylphosphatase-like" evidence="1">
    <location>
        <begin position="3"/>
        <end position="89"/>
    </location>
</feature>
<feature type="active site" evidence="1">
    <location>
        <position position="18"/>
    </location>
</feature>
<feature type="active site" evidence="1">
    <location>
        <position position="36"/>
    </location>
</feature>
<sequence>MRHIHLQVFGRVQGVGFRYFTQRIAMNYNIVGTVQNVDDYVEIYAQGDDADIERFIQGVIEGASPASNVTSHQLEELELNQKLSDFRSI</sequence>
<dbReference type="EC" id="3.6.1.7"/>
<dbReference type="EMBL" id="CP000255">
    <property type="protein sequence ID" value="ABD20501.1"/>
    <property type="molecule type" value="Genomic_DNA"/>
</dbReference>
<dbReference type="RefSeq" id="WP_001215907.1">
    <property type="nucleotide sequence ID" value="NZ_CP027476.1"/>
</dbReference>
<dbReference type="SMR" id="Q2FH34"/>
<dbReference type="KEGG" id="saa:SAUSA300_1297"/>
<dbReference type="HOGENOM" id="CLU_141932_2_1_9"/>
<dbReference type="Proteomes" id="UP000001939">
    <property type="component" value="Chromosome"/>
</dbReference>
<dbReference type="GO" id="GO:0003998">
    <property type="term" value="F:acylphosphatase activity"/>
    <property type="evidence" value="ECO:0007669"/>
    <property type="project" value="UniProtKB-EC"/>
</dbReference>
<dbReference type="GO" id="GO:0016743">
    <property type="term" value="F:carboxyl- or carbamoyltransferase activity"/>
    <property type="evidence" value="ECO:0007669"/>
    <property type="project" value="TreeGrafter"/>
</dbReference>
<dbReference type="GO" id="GO:0008270">
    <property type="term" value="F:zinc ion binding"/>
    <property type="evidence" value="ECO:0007669"/>
    <property type="project" value="TreeGrafter"/>
</dbReference>
<dbReference type="GO" id="GO:0051604">
    <property type="term" value="P:protein maturation"/>
    <property type="evidence" value="ECO:0007669"/>
    <property type="project" value="TreeGrafter"/>
</dbReference>
<dbReference type="Gene3D" id="3.30.70.100">
    <property type="match status" value="1"/>
</dbReference>
<dbReference type="InterPro" id="IPR001792">
    <property type="entry name" value="Acylphosphatase-like_dom"/>
</dbReference>
<dbReference type="InterPro" id="IPR036046">
    <property type="entry name" value="Acylphosphatase-like_dom_sf"/>
</dbReference>
<dbReference type="InterPro" id="IPR017968">
    <property type="entry name" value="Acylphosphatase_CS"/>
</dbReference>
<dbReference type="InterPro" id="IPR051060">
    <property type="entry name" value="Carbamoyltrans_HypF-like"/>
</dbReference>
<dbReference type="NCBIfam" id="NF011005">
    <property type="entry name" value="PRK14431.1"/>
    <property type="match status" value="1"/>
</dbReference>
<dbReference type="PANTHER" id="PTHR42959">
    <property type="entry name" value="CARBAMOYLTRANSFERASE"/>
    <property type="match status" value="1"/>
</dbReference>
<dbReference type="PANTHER" id="PTHR42959:SF1">
    <property type="entry name" value="CARBAMOYLTRANSFERASE HYPF"/>
    <property type="match status" value="1"/>
</dbReference>
<dbReference type="Pfam" id="PF00708">
    <property type="entry name" value="Acylphosphatase"/>
    <property type="match status" value="1"/>
</dbReference>
<dbReference type="SUPFAM" id="SSF54975">
    <property type="entry name" value="Acylphosphatase/BLUF domain-like"/>
    <property type="match status" value="1"/>
</dbReference>
<dbReference type="PROSITE" id="PS00150">
    <property type="entry name" value="ACYLPHOSPHATASE_1"/>
    <property type="match status" value="1"/>
</dbReference>
<dbReference type="PROSITE" id="PS51160">
    <property type="entry name" value="ACYLPHOSPHATASE_3"/>
    <property type="match status" value="1"/>
</dbReference>
<evidence type="ECO:0000255" key="1">
    <source>
        <dbReference type="PROSITE-ProRule" id="PRU00520"/>
    </source>
</evidence>
<evidence type="ECO:0000305" key="2"/>
<name>ACYP_STAA3</name>
<reference key="1">
    <citation type="journal article" date="2006" name="Lancet">
        <title>Complete genome sequence of USA300, an epidemic clone of community-acquired meticillin-resistant Staphylococcus aureus.</title>
        <authorList>
            <person name="Diep B.A."/>
            <person name="Gill S.R."/>
            <person name="Chang R.F."/>
            <person name="Phan T.H."/>
            <person name="Chen J.H."/>
            <person name="Davidson M.G."/>
            <person name="Lin F."/>
            <person name="Lin J."/>
            <person name="Carleton H.A."/>
            <person name="Mongodin E.F."/>
            <person name="Sensabaugh G.F."/>
            <person name="Perdreau-Remington F."/>
        </authorList>
    </citation>
    <scope>NUCLEOTIDE SEQUENCE [LARGE SCALE GENOMIC DNA]</scope>
    <source>
        <strain>USA300</strain>
    </source>
</reference>
<accession>Q2FH34</accession>
<keyword id="KW-0378">Hydrolase</keyword>
<gene>
    <name type="primary">acyP</name>
    <name type="ordered locus">SAUSA300_1297</name>
</gene>
<protein>
    <recommendedName>
        <fullName>Acylphosphatase</fullName>
        <ecNumber>3.6.1.7</ecNumber>
    </recommendedName>
    <alternativeName>
        <fullName>Acylphosphate phosphohydrolase</fullName>
    </alternativeName>
</protein>
<proteinExistence type="inferred from homology"/>